<sequence length="84" mass="9103">MAHKKGGGSSKNGRDSNSQRLGVKRFGGESVLAGNILVRQRGTKFRPGNNVGLGKDHTLFALVTGKVKFEMVTKLKMQVSVYPE</sequence>
<proteinExistence type="inferred from homology"/>
<keyword id="KW-0687">Ribonucleoprotein</keyword>
<keyword id="KW-0689">Ribosomal protein</keyword>
<comment type="similarity">
    <text evidence="1">Belongs to the bacterial ribosomal protein bL27 family.</text>
</comment>
<dbReference type="EMBL" id="AE016823">
    <property type="protein sequence ID" value="AAS71330.1"/>
    <property type="molecule type" value="Genomic_DNA"/>
</dbReference>
<dbReference type="RefSeq" id="WP_000940600.1">
    <property type="nucleotide sequence ID" value="NC_005823.1"/>
</dbReference>
<dbReference type="SMR" id="Q72NQ6"/>
<dbReference type="GeneID" id="61173119"/>
<dbReference type="KEGG" id="lic:LIC_12774"/>
<dbReference type="HOGENOM" id="CLU_095424_4_1_12"/>
<dbReference type="Proteomes" id="UP000007037">
    <property type="component" value="Chromosome I"/>
</dbReference>
<dbReference type="GO" id="GO:0022625">
    <property type="term" value="C:cytosolic large ribosomal subunit"/>
    <property type="evidence" value="ECO:0007669"/>
    <property type="project" value="TreeGrafter"/>
</dbReference>
<dbReference type="GO" id="GO:0003735">
    <property type="term" value="F:structural constituent of ribosome"/>
    <property type="evidence" value="ECO:0007669"/>
    <property type="project" value="InterPro"/>
</dbReference>
<dbReference type="GO" id="GO:0006412">
    <property type="term" value="P:translation"/>
    <property type="evidence" value="ECO:0007669"/>
    <property type="project" value="UniProtKB-UniRule"/>
</dbReference>
<dbReference type="FunFam" id="2.40.50.100:FF:000001">
    <property type="entry name" value="50S ribosomal protein L27"/>
    <property type="match status" value="1"/>
</dbReference>
<dbReference type="Gene3D" id="2.40.50.100">
    <property type="match status" value="1"/>
</dbReference>
<dbReference type="HAMAP" id="MF_00539">
    <property type="entry name" value="Ribosomal_bL27"/>
    <property type="match status" value="1"/>
</dbReference>
<dbReference type="InterPro" id="IPR001684">
    <property type="entry name" value="Ribosomal_bL27"/>
</dbReference>
<dbReference type="InterPro" id="IPR018261">
    <property type="entry name" value="Ribosomal_bL27_CS"/>
</dbReference>
<dbReference type="NCBIfam" id="TIGR00062">
    <property type="entry name" value="L27"/>
    <property type="match status" value="1"/>
</dbReference>
<dbReference type="PANTHER" id="PTHR15893:SF0">
    <property type="entry name" value="LARGE RIBOSOMAL SUBUNIT PROTEIN BL27M"/>
    <property type="match status" value="1"/>
</dbReference>
<dbReference type="PANTHER" id="PTHR15893">
    <property type="entry name" value="RIBOSOMAL PROTEIN L27"/>
    <property type="match status" value="1"/>
</dbReference>
<dbReference type="Pfam" id="PF01016">
    <property type="entry name" value="Ribosomal_L27"/>
    <property type="match status" value="1"/>
</dbReference>
<dbReference type="PRINTS" id="PR00063">
    <property type="entry name" value="RIBOSOMALL27"/>
</dbReference>
<dbReference type="SUPFAM" id="SSF110324">
    <property type="entry name" value="Ribosomal L27 protein-like"/>
    <property type="match status" value="1"/>
</dbReference>
<dbReference type="PROSITE" id="PS00831">
    <property type="entry name" value="RIBOSOMAL_L27"/>
    <property type="match status" value="1"/>
</dbReference>
<protein>
    <recommendedName>
        <fullName evidence="1">Large ribosomal subunit protein bL27</fullName>
    </recommendedName>
    <alternativeName>
        <fullName evidence="3">50S ribosomal protein L27</fullName>
    </alternativeName>
</protein>
<feature type="chain" id="PRO_0000181111" description="Large ribosomal subunit protein bL27">
    <location>
        <begin position="1"/>
        <end position="84"/>
    </location>
</feature>
<feature type="region of interest" description="Disordered" evidence="2">
    <location>
        <begin position="1"/>
        <end position="24"/>
    </location>
</feature>
<accession>Q72NQ6</accession>
<organism>
    <name type="scientific">Leptospira interrogans serogroup Icterohaemorrhagiae serovar copenhageni (strain Fiocruz L1-130)</name>
    <dbReference type="NCBI Taxonomy" id="267671"/>
    <lineage>
        <taxon>Bacteria</taxon>
        <taxon>Pseudomonadati</taxon>
        <taxon>Spirochaetota</taxon>
        <taxon>Spirochaetia</taxon>
        <taxon>Leptospirales</taxon>
        <taxon>Leptospiraceae</taxon>
        <taxon>Leptospira</taxon>
    </lineage>
</organism>
<evidence type="ECO:0000255" key="1">
    <source>
        <dbReference type="HAMAP-Rule" id="MF_00539"/>
    </source>
</evidence>
<evidence type="ECO:0000256" key="2">
    <source>
        <dbReference type="SAM" id="MobiDB-lite"/>
    </source>
</evidence>
<evidence type="ECO:0000305" key="3"/>
<gene>
    <name evidence="1" type="primary">rpmA</name>
    <name type="ordered locus">LIC_12774</name>
</gene>
<name>RL27_LEPIC</name>
<reference key="1">
    <citation type="journal article" date="2004" name="J. Bacteriol.">
        <title>Comparative genomics of two Leptospira interrogans serovars reveals novel insights into physiology and pathogenesis.</title>
        <authorList>
            <person name="Nascimento A.L.T.O."/>
            <person name="Ko A.I."/>
            <person name="Martins E.A.L."/>
            <person name="Monteiro-Vitorello C.B."/>
            <person name="Ho P.L."/>
            <person name="Haake D.A."/>
            <person name="Verjovski-Almeida S."/>
            <person name="Hartskeerl R.A."/>
            <person name="Marques M.V."/>
            <person name="Oliveira M.C."/>
            <person name="Menck C.F.M."/>
            <person name="Leite L.C.C."/>
            <person name="Carrer H."/>
            <person name="Coutinho L.L."/>
            <person name="Degrave W.M."/>
            <person name="Dellagostin O.A."/>
            <person name="El-Dorry H."/>
            <person name="Ferro E.S."/>
            <person name="Ferro M.I.T."/>
            <person name="Furlan L.R."/>
            <person name="Gamberini M."/>
            <person name="Giglioti E.A."/>
            <person name="Goes-Neto A."/>
            <person name="Goldman G.H."/>
            <person name="Goldman M.H.S."/>
            <person name="Harakava R."/>
            <person name="Jeronimo S.M.B."/>
            <person name="Junqueira-de-Azevedo I.L.M."/>
            <person name="Kimura E.T."/>
            <person name="Kuramae E.E."/>
            <person name="Lemos E.G.M."/>
            <person name="Lemos M.V.F."/>
            <person name="Marino C.L."/>
            <person name="Nunes L.R."/>
            <person name="de Oliveira R.C."/>
            <person name="Pereira G.G."/>
            <person name="Reis M.S."/>
            <person name="Schriefer A."/>
            <person name="Siqueira W.J."/>
            <person name="Sommer P."/>
            <person name="Tsai S.M."/>
            <person name="Simpson A.J.G."/>
            <person name="Ferro J.A."/>
            <person name="Camargo L.E.A."/>
            <person name="Kitajima J.P."/>
            <person name="Setubal J.C."/>
            <person name="Van Sluys M.A."/>
        </authorList>
    </citation>
    <scope>NUCLEOTIDE SEQUENCE [LARGE SCALE GENOMIC DNA]</scope>
    <source>
        <strain>Fiocruz L1-130</strain>
    </source>
</reference>